<gene>
    <name evidence="1" type="primary">rplN</name>
    <name type="ordered locus">Psyr_4538</name>
</gene>
<reference key="1">
    <citation type="journal article" date="2005" name="Proc. Natl. Acad. Sci. U.S.A.">
        <title>Comparison of the complete genome sequences of Pseudomonas syringae pv. syringae B728a and pv. tomato DC3000.</title>
        <authorList>
            <person name="Feil H."/>
            <person name="Feil W.S."/>
            <person name="Chain P."/>
            <person name="Larimer F."/>
            <person name="Dibartolo G."/>
            <person name="Copeland A."/>
            <person name="Lykidis A."/>
            <person name="Trong S."/>
            <person name="Nolan M."/>
            <person name="Goltsman E."/>
            <person name="Thiel J."/>
            <person name="Malfatti S."/>
            <person name="Loper J.E."/>
            <person name="Lapidus A."/>
            <person name="Detter J.C."/>
            <person name="Land M."/>
            <person name="Richardson P.M."/>
            <person name="Kyrpides N.C."/>
            <person name="Ivanova N."/>
            <person name="Lindow S.E."/>
        </authorList>
    </citation>
    <scope>NUCLEOTIDE SEQUENCE [LARGE SCALE GENOMIC DNA]</scope>
    <source>
        <strain>B728a</strain>
    </source>
</reference>
<protein>
    <recommendedName>
        <fullName evidence="1">Large ribosomal subunit protein uL14</fullName>
    </recommendedName>
    <alternativeName>
        <fullName evidence="2">50S ribosomal protein L14</fullName>
    </alternativeName>
</protein>
<proteinExistence type="inferred from homology"/>
<sequence length="122" mass="13410">MIQTQSMLDVADNSGARRVMCIKVLGGSHRRYAGIGDIIKVTVKEAIPRGKVKKGQVMTAVVVRTRHGVRRADGSIIRFDGNAAVLLNNKQEPIGTRIFGPVTRELRTEKFMKIVSLAPEVL</sequence>
<name>RL14_PSEU2</name>
<keyword id="KW-0687">Ribonucleoprotein</keyword>
<keyword id="KW-0689">Ribosomal protein</keyword>
<keyword id="KW-0694">RNA-binding</keyword>
<keyword id="KW-0699">rRNA-binding</keyword>
<evidence type="ECO:0000255" key="1">
    <source>
        <dbReference type="HAMAP-Rule" id="MF_01367"/>
    </source>
</evidence>
<evidence type="ECO:0000305" key="2"/>
<comment type="function">
    <text evidence="1">Binds to 23S rRNA. Forms part of two intersubunit bridges in the 70S ribosome.</text>
</comment>
<comment type="subunit">
    <text evidence="1">Part of the 50S ribosomal subunit. Forms a cluster with proteins L3 and L19. In the 70S ribosome, L14 and L19 interact and together make contacts with the 16S rRNA in bridges B5 and B8.</text>
</comment>
<comment type="similarity">
    <text evidence="1">Belongs to the universal ribosomal protein uL14 family.</text>
</comment>
<organism>
    <name type="scientific">Pseudomonas syringae pv. syringae (strain B728a)</name>
    <dbReference type="NCBI Taxonomy" id="205918"/>
    <lineage>
        <taxon>Bacteria</taxon>
        <taxon>Pseudomonadati</taxon>
        <taxon>Pseudomonadota</taxon>
        <taxon>Gammaproteobacteria</taxon>
        <taxon>Pseudomonadales</taxon>
        <taxon>Pseudomonadaceae</taxon>
        <taxon>Pseudomonas</taxon>
        <taxon>Pseudomonas syringae</taxon>
    </lineage>
</organism>
<accession>Q4ZMQ4</accession>
<feature type="chain" id="PRO_0000266530" description="Large ribosomal subunit protein uL14">
    <location>
        <begin position="1"/>
        <end position="122"/>
    </location>
</feature>
<dbReference type="EMBL" id="CP000075">
    <property type="protein sequence ID" value="AAY39568.1"/>
    <property type="molecule type" value="Genomic_DNA"/>
</dbReference>
<dbReference type="RefSeq" id="WP_002555479.1">
    <property type="nucleotide sequence ID" value="NC_007005.1"/>
</dbReference>
<dbReference type="RefSeq" id="YP_237606.1">
    <property type="nucleotide sequence ID" value="NC_007005.1"/>
</dbReference>
<dbReference type="SMR" id="Q4ZMQ4"/>
<dbReference type="STRING" id="205918.Psyr_4538"/>
<dbReference type="GeneID" id="98285428"/>
<dbReference type="KEGG" id="psb:Psyr_4538"/>
<dbReference type="PATRIC" id="fig|205918.7.peg.4677"/>
<dbReference type="eggNOG" id="COG0093">
    <property type="taxonomic scope" value="Bacteria"/>
</dbReference>
<dbReference type="HOGENOM" id="CLU_095071_2_1_6"/>
<dbReference type="OrthoDB" id="9806379at2"/>
<dbReference type="PRO" id="PR:Q4ZMQ4"/>
<dbReference type="Proteomes" id="UP000000426">
    <property type="component" value="Chromosome"/>
</dbReference>
<dbReference type="GO" id="GO:0022625">
    <property type="term" value="C:cytosolic large ribosomal subunit"/>
    <property type="evidence" value="ECO:0007669"/>
    <property type="project" value="TreeGrafter"/>
</dbReference>
<dbReference type="GO" id="GO:0070180">
    <property type="term" value="F:large ribosomal subunit rRNA binding"/>
    <property type="evidence" value="ECO:0007669"/>
    <property type="project" value="TreeGrafter"/>
</dbReference>
<dbReference type="GO" id="GO:0003735">
    <property type="term" value="F:structural constituent of ribosome"/>
    <property type="evidence" value="ECO:0007669"/>
    <property type="project" value="InterPro"/>
</dbReference>
<dbReference type="GO" id="GO:0006412">
    <property type="term" value="P:translation"/>
    <property type="evidence" value="ECO:0007669"/>
    <property type="project" value="UniProtKB-UniRule"/>
</dbReference>
<dbReference type="CDD" id="cd00337">
    <property type="entry name" value="Ribosomal_uL14"/>
    <property type="match status" value="1"/>
</dbReference>
<dbReference type="FunFam" id="2.40.150.20:FF:000001">
    <property type="entry name" value="50S ribosomal protein L14"/>
    <property type="match status" value="1"/>
</dbReference>
<dbReference type="Gene3D" id="2.40.150.20">
    <property type="entry name" value="Ribosomal protein L14"/>
    <property type="match status" value="1"/>
</dbReference>
<dbReference type="HAMAP" id="MF_01367">
    <property type="entry name" value="Ribosomal_uL14"/>
    <property type="match status" value="1"/>
</dbReference>
<dbReference type="InterPro" id="IPR000218">
    <property type="entry name" value="Ribosomal_uL14"/>
</dbReference>
<dbReference type="InterPro" id="IPR005745">
    <property type="entry name" value="Ribosomal_uL14_bac-type"/>
</dbReference>
<dbReference type="InterPro" id="IPR019972">
    <property type="entry name" value="Ribosomal_uL14_CS"/>
</dbReference>
<dbReference type="InterPro" id="IPR036853">
    <property type="entry name" value="Ribosomal_uL14_sf"/>
</dbReference>
<dbReference type="NCBIfam" id="TIGR01067">
    <property type="entry name" value="rplN_bact"/>
    <property type="match status" value="1"/>
</dbReference>
<dbReference type="PANTHER" id="PTHR11761">
    <property type="entry name" value="50S/60S RIBOSOMAL PROTEIN L14/L23"/>
    <property type="match status" value="1"/>
</dbReference>
<dbReference type="PANTHER" id="PTHR11761:SF3">
    <property type="entry name" value="LARGE RIBOSOMAL SUBUNIT PROTEIN UL14M"/>
    <property type="match status" value="1"/>
</dbReference>
<dbReference type="Pfam" id="PF00238">
    <property type="entry name" value="Ribosomal_L14"/>
    <property type="match status" value="1"/>
</dbReference>
<dbReference type="SMART" id="SM01374">
    <property type="entry name" value="Ribosomal_L14"/>
    <property type="match status" value="1"/>
</dbReference>
<dbReference type="SUPFAM" id="SSF50193">
    <property type="entry name" value="Ribosomal protein L14"/>
    <property type="match status" value="1"/>
</dbReference>
<dbReference type="PROSITE" id="PS00049">
    <property type="entry name" value="RIBOSOMAL_L14"/>
    <property type="match status" value="1"/>
</dbReference>